<dbReference type="EMBL" id="U82619">
    <property type="protein sequence ID" value="AAL89429.1"/>
    <property type="molecule type" value="Genomic_DNA"/>
</dbReference>
<dbReference type="RefSeq" id="NP_599054.1">
    <property type="nucleotide sequence ID" value="NC_003444.1"/>
</dbReference>
<dbReference type="SMR" id="O22005"/>
<dbReference type="KEGG" id="vg:935238"/>
<dbReference type="OrthoDB" id="11867at10239"/>
<dbReference type="Proteomes" id="UP000009068">
    <property type="component" value="Genome"/>
</dbReference>
<dbReference type="GO" id="GO:0098004">
    <property type="term" value="P:virus tail fiber assembly"/>
    <property type="evidence" value="ECO:0007669"/>
    <property type="project" value="UniProtKB-KW"/>
</dbReference>
<dbReference type="InterPro" id="IPR003458">
    <property type="entry name" value="Phage_T4_Gp38_tail_assem"/>
</dbReference>
<dbReference type="InterPro" id="IPR051220">
    <property type="entry name" value="TFA_Chaperone"/>
</dbReference>
<dbReference type="PANTHER" id="PTHR34413:SF2">
    <property type="entry name" value="PROPHAGE TAIL FIBER ASSEMBLY PROTEIN HOMOLOG TFAE-RELATED"/>
    <property type="match status" value="1"/>
</dbReference>
<dbReference type="PANTHER" id="PTHR34413">
    <property type="entry name" value="PROPHAGE TAIL FIBER ASSEMBLY PROTEIN HOMOLOG TFAE-RELATED-RELATED"/>
    <property type="match status" value="1"/>
</dbReference>
<dbReference type="Pfam" id="PF02413">
    <property type="entry name" value="Caudo_TAP"/>
    <property type="match status" value="1"/>
</dbReference>
<accession>O22005</accession>
<accession>Q8SBG3</accession>
<reference key="1">
    <citation type="journal article" date="1997" name="Gene">
        <title>Shigella flexneri type-specific antigen V: cloning, sequencing and characterization of the glucosyl transferase gene of temperate bacteriophage SfV.</title>
        <authorList>
            <person name="Huan P.T."/>
            <person name="Whittle B.L."/>
            <person name="Bastin D.A."/>
            <person name="Lindberg A.A."/>
            <person name="Verma N.K."/>
        </authorList>
    </citation>
    <scope>NUCLEOTIDE SEQUENCE [GENOMIC DNA]</scope>
</reference>
<reference key="2">
    <citation type="journal article" date="2002" name="J. Bacteriol.">
        <title>Complete genomic sequence of SfV, a serotype-converting temperate bacteriophage of Shigella flexneri.</title>
        <authorList>
            <person name="Allison G.E."/>
            <person name="Angeles D."/>
            <person name="Tran-Dinh N."/>
            <person name="Verma N.K."/>
        </authorList>
    </citation>
    <scope>NUCLEOTIDE SEQUENCE [LARGE SCALE GENOMIC DNA]</scope>
</reference>
<gene>
    <name type="primary">22</name>
</gene>
<proteinExistence type="inferred from homology"/>
<organism>
    <name type="scientific">Shigella phage SfV</name>
    <name type="common">Shigella flexneri bacteriophage V</name>
    <name type="synonym">Bacteriophage SfV</name>
    <dbReference type="NCBI Taxonomy" id="55884"/>
    <lineage>
        <taxon>Viruses</taxon>
        <taxon>Duplodnaviria</taxon>
        <taxon>Heunggongvirae</taxon>
        <taxon>Uroviricota</taxon>
        <taxon>Caudoviricetes</taxon>
    </lineage>
</organism>
<sequence>MSRTLDLILLCRLVQDTAHLLMRITLQWDINEMSYFYSASTNGFYSTEFHGTNIPDDAVEISESEWETLINSQGVTKMITCGENGHPVIVDRPSPTPERLALINDEKKSALIAEATNVIAPLQDAVDLGMATDDETKLLLAWEKYRVLLMRVDIKNTEWPKKPEGNK</sequence>
<evidence type="ECO:0000250" key="1"/>
<evidence type="ECO:0000305" key="2"/>
<keyword id="KW-0143">Chaperone</keyword>
<keyword id="KW-1185">Reference proteome</keyword>
<keyword id="KW-1188">Viral release from host cell</keyword>
<keyword id="KW-1245">Viral tail assembly</keyword>
<keyword id="KW-1246">Viral tail fiber assembly</keyword>
<comment type="function">
    <text evidence="1">Chaperone involved in tail fiber assembly.</text>
</comment>
<comment type="similarity">
    <text evidence="2">Belongs to the tfa family.</text>
</comment>
<feature type="chain" id="PRO_0000070313" description="Probable tail fiber assembly protein">
    <location>
        <begin position="1"/>
        <end position="167"/>
    </location>
</feature>
<feature type="sequence conflict" description="In Ref. 1." evidence="2" ref="1">
    <original>E</original>
    <variation>G</variation>
    <location>
        <position position="32"/>
    </location>
</feature>
<feature type="sequence conflict" description="In Ref. 1." evidence="2" ref="1">
    <original>IA</original>
    <variation>NT</variation>
    <location>
        <begin position="119"/>
        <end position="120"/>
    </location>
</feature>
<protein>
    <recommendedName>
        <fullName>Probable tail fiber assembly protein</fullName>
    </recommendedName>
    <alternativeName>
        <fullName>P37</fullName>
    </alternativeName>
</protein>
<name>TFA_BPSF5</name>
<organismHost>
    <name type="scientific">Shigella flexneri</name>
    <dbReference type="NCBI Taxonomy" id="623"/>
</organismHost>